<feature type="chain" id="PRO_0000130166" description="Small ribosomal subunit protein uS3">
    <location>
        <begin position="1"/>
        <end position="214"/>
    </location>
</feature>
<feature type="domain" description="KH type-2" evidence="1">
    <location>
        <begin position="39"/>
        <end position="107"/>
    </location>
</feature>
<protein>
    <recommendedName>
        <fullName evidence="1">Small ribosomal subunit protein uS3</fullName>
    </recommendedName>
    <alternativeName>
        <fullName evidence="2">30S ribosomal protein S3</fullName>
    </alternativeName>
</protein>
<gene>
    <name evidence="1" type="primary">rpsC</name>
    <name type="ordered locus">pc0418</name>
</gene>
<evidence type="ECO:0000255" key="1">
    <source>
        <dbReference type="HAMAP-Rule" id="MF_01309"/>
    </source>
</evidence>
<evidence type="ECO:0000305" key="2"/>
<keyword id="KW-1185">Reference proteome</keyword>
<keyword id="KW-0687">Ribonucleoprotein</keyword>
<keyword id="KW-0689">Ribosomal protein</keyword>
<keyword id="KW-0694">RNA-binding</keyword>
<keyword id="KW-0699">rRNA-binding</keyword>
<comment type="function">
    <text evidence="1">Binds the lower part of the 30S subunit head. Binds mRNA in the 70S ribosome, positioning it for translation.</text>
</comment>
<comment type="subunit">
    <text evidence="1">Part of the 30S ribosomal subunit. Forms a tight complex with proteins S10 and S14.</text>
</comment>
<comment type="similarity">
    <text evidence="1">Belongs to the universal ribosomal protein uS3 family.</text>
</comment>
<sequence length="214" mass="23858">MGQKVNPISFRLVRTRDWRSKWFANKKEFGDLLVEDQIIRAYLLKKPALVGVSAIKIKRMSGKVEVTIVTARPGLVIGKKGAEIDVLKGELSKLTGKEVWVAVEEVKRPDMDAKIVADSIAKQLERRIPFRRAMKKAMQSSIDAGAFGIKVQLSGRIGGAEIARTEWYKEGSTPLHTLRADIDYATGRAETTYGSIGVKVWIYRGEDNLAKKEA</sequence>
<organism>
    <name type="scientific">Protochlamydia amoebophila (strain UWE25)</name>
    <dbReference type="NCBI Taxonomy" id="264201"/>
    <lineage>
        <taxon>Bacteria</taxon>
        <taxon>Pseudomonadati</taxon>
        <taxon>Chlamydiota</taxon>
        <taxon>Chlamydiia</taxon>
        <taxon>Parachlamydiales</taxon>
        <taxon>Parachlamydiaceae</taxon>
        <taxon>Candidatus Protochlamydia</taxon>
    </lineage>
</organism>
<dbReference type="EMBL" id="BX908798">
    <property type="protein sequence ID" value="CAF23142.1"/>
    <property type="molecule type" value="Genomic_DNA"/>
</dbReference>
<dbReference type="RefSeq" id="WP_011174968.1">
    <property type="nucleotide sequence ID" value="NC_005861.2"/>
</dbReference>
<dbReference type="SMR" id="Q6ME57"/>
<dbReference type="STRING" id="264201.pc0418"/>
<dbReference type="KEGG" id="pcu:PC_RS02040"/>
<dbReference type="eggNOG" id="COG0092">
    <property type="taxonomic scope" value="Bacteria"/>
</dbReference>
<dbReference type="HOGENOM" id="CLU_058591_0_2_0"/>
<dbReference type="OrthoDB" id="9806396at2"/>
<dbReference type="Proteomes" id="UP000000529">
    <property type="component" value="Chromosome"/>
</dbReference>
<dbReference type="GO" id="GO:0022627">
    <property type="term" value="C:cytosolic small ribosomal subunit"/>
    <property type="evidence" value="ECO:0007669"/>
    <property type="project" value="TreeGrafter"/>
</dbReference>
<dbReference type="GO" id="GO:0003729">
    <property type="term" value="F:mRNA binding"/>
    <property type="evidence" value="ECO:0007669"/>
    <property type="project" value="UniProtKB-UniRule"/>
</dbReference>
<dbReference type="GO" id="GO:0019843">
    <property type="term" value="F:rRNA binding"/>
    <property type="evidence" value="ECO:0007669"/>
    <property type="project" value="UniProtKB-UniRule"/>
</dbReference>
<dbReference type="GO" id="GO:0003735">
    <property type="term" value="F:structural constituent of ribosome"/>
    <property type="evidence" value="ECO:0007669"/>
    <property type="project" value="InterPro"/>
</dbReference>
<dbReference type="GO" id="GO:0006412">
    <property type="term" value="P:translation"/>
    <property type="evidence" value="ECO:0007669"/>
    <property type="project" value="UniProtKB-UniRule"/>
</dbReference>
<dbReference type="CDD" id="cd02412">
    <property type="entry name" value="KH-II_30S_S3"/>
    <property type="match status" value="1"/>
</dbReference>
<dbReference type="FunFam" id="3.30.300.20:FF:000001">
    <property type="entry name" value="30S ribosomal protein S3"/>
    <property type="match status" value="1"/>
</dbReference>
<dbReference type="Gene3D" id="3.30.300.20">
    <property type="match status" value="1"/>
</dbReference>
<dbReference type="Gene3D" id="3.30.1140.32">
    <property type="entry name" value="Ribosomal protein S3, C-terminal domain"/>
    <property type="match status" value="1"/>
</dbReference>
<dbReference type="HAMAP" id="MF_01309_B">
    <property type="entry name" value="Ribosomal_uS3_B"/>
    <property type="match status" value="1"/>
</dbReference>
<dbReference type="InterPro" id="IPR004087">
    <property type="entry name" value="KH_dom"/>
</dbReference>
<dbReference type="InterPro" id="IPR015946">
    <property type="entry name" value="KH_dom-like_a/b"/>
</dbReference>
<dbReference type="InterPro" id="IPR004044">
    <property type="entry name" value="KH_dom_type_2"/>
</dbReference>
<dbReference type="InterPro" id="IPR009019">
    <property type="entry name" value="KH_sf_prok-type"/>
</dbReference>
<dbReference type="InterPro" id="IPR036419">
    <property type="entry name" value="Ribosomal_S3_C_sf"/>
</dbReference>
<dbReference type="InterPro" id="IPR005704">
    <property type="entry name" value="Ribosomal_uS3_bac-typ"/>
</dbReference>
<dbReference type="InterPro" id="IPR001351">
    <property type="entry name" value="Ribosomal_uS3_C"/>
</dbReference>
<dbReference type="InterPro" id="IPR018280">
    <property type="entry name" value="Ribosomal_uS3_CS"/>
</dbReference>
<dbReference type="NCBIfam" id="TIGR01009">
    <property type="entry name" value="rpsC_bact"/>
    <property type="match status" value="1"/>
</dbReference>
<dbReference type="PANTHER" id="PTHR11760">
    <property type="entry name" value="30S/40S RIBOSOMAL PROTEIN S3"/>
    <property type="match status" value="1"/>
</dbReference>
<dbReference type="PANTHER" id="PTHR11760:SF19">
    <property type="entry name" value="SMALL RIBOSOMAL SUBUNIT PROTEIN US3C"/>
    <property type="match status" value="1"/>
</dbReference>
<dbReference type="Pfam" id="PF07650">
    <property type="entry name" value="KH_2"/>
    <property type="match status" value="1"/>
</dbReference>
<dbReference type="Pfam" id="PF00189">
    <property type="entry name" value="Ribosomal_S3_C"/>
    <property type="match status" value="1"/>
</dbReference>
<dbReference type="SMART" id="SM00322">
    <property type="entry name" value="KH"/>
    <property type="match status" value="1"/>
</dbReference>
<dbReference type="SUPFAM" id="SSF54814">
    <property type="entry name" value="Prokaryotic type KH domain (KH-domain type II)"/>
    <property type="match status" value="1"/>
</dbReference>
<dbReference type="SUPFAM" id="SSF54821">
    <property type="entry name" value="Ribosomal protein S3 C-terminal domain"/>
    <property type="match status" value="1"/>
</dbReference>
<dbReference type="PROSITE" id="PS50823">
    <property type="entry name" value="KH_TYPE_2"/>
    <property type="match status" value="1"/>
</dbReference>
<dbReference type="PROSITE" id="PS00548">
    <property type="entry name" value="RIBOSOMAL_S3"/>
    <property type="match status" value="1"/>
</dbReference>
<accession>Q6ME57</accession>
<reference key="1">
    <citation type="journal article" date="2004" name="Science">
        <title>Illuminating the evolutionary history of chlamydiae.</title>
        <authorList>
            <person name="Horn M."/>
            <person name="Collingro A."/>
            <person name="Schmitz-Esser S."/>
            <person name="Beier C.L."/>
            <person name="Purkhold U."/>
            <person name="Fartmann B."/>
            <person name="Brandt P."/>
            <person name="Nyakatura G.J."/>
            <person name="Droege M."/>
            <person name="Frishman D."/>
            <person name="Rattei T."/>
            <person name="Mewes H.-W."/>
            <person name="Wagner M."/>
        </authorList>
    </citation>
    <scope>NUCLEOTIDE SEQUENCE [LARGE SCALE GENOMIC DNA]</scope>
    <source>
        <strain>UWE25</strain>
    </source>
</reference>
<name>RS3_PARUW</name>
<proteinExistence type="inferred from homology"/>